<reference key="1">
    <citation type="journal article" date="2005" name="Nature">
        <title>Genomic sequence of the pathogenic and allergenic filamentous fungus Aspergillus fumigatus.</title>
        <authorList>
            <person name="Nierman W.C."/>
            <person name="Pain A."/>
            <person name="Anderson M.J."/>
            <person name="Wortman J.R."/>
            <person name="Kim H.S."/>
            <person name="Arroyo J."/>
            <person name="Berriman M."/>
            <person name="Abe K."/>
            <person name="Archer D.B."/>
            <person name="Bermejo C."/>
            <person name="Bennett J.W."/>
            <person name="Bowyer P."/>
            <person name="Chen D."/>
            <person name="Collins M."/>
            <person name="Coulsen R."/>
            <person name="Davies R."/>
            <person name="Dyer P.S."/>
            <person name="Farman M.L."/>
            <person name="Fedorova N."/>
            <person name="Fedorova N.D."/>
            <person name="Feldblyum T.V."/>
            <person name="Fischer R."/>
            <person name="Fosker N."/>
            <person name="Fraser A."/>
            <person name="Garcia J.L."/>
            <person name="Garcia M.J."/>
            <person name="Goble A."/>
            <person name="Goldman G.H."/>
            <person name="Gomi K."/>
            <person name="Griffith-Jones S."/>
            <person name="Gwilliam R."/>
            <person name="Haas B.J."/>
            <person name="Haas H."/>
            <person name="Harris D.E."/>
            <person name="Horiuchi H."/>
            <person name="Huang J."/>
            <person name="Humphray S."/>
            <person name="Jimenez J."/>
            <person name="Keller N."/>
            <person name="Khouri H."/>
            <person name="Kitamoto K."/>
            <person name="Kobayashi T."/>
            <person name="Konzack S."/>
            <person name="Kulkarni R."/>
            <person name="Kumagai T."/>
            <person name="Lafton A."/>
            <person name="Latge J.-P."/>
            <person name="Li W."/>
            <person name="Lord A."/>
            <person name="Lu C."/>
            <person name="Majoros W.H."/>
            <person name="May G.S."/>
            <person name="Miller B.L."/>
            <person name="Mohamoud Y."/>
            <person name="Molina M."/>
            <person name="Monod M."/>
            <person name="Mouyna I."/>
            <person name="Mulligan S."/>
            <person name="Murphy L.D."/>
            <person name="O'Neil S."/>
            <person name="Paulsen I."/>
            <person name="Penalva M.A."/>
            <person name="Pertea M."/>
            <person name="Price C."/>
            <person name="Pritchard B.L."/>
            <person name="Quail M.A."/>
            <person name="Rabbinowitsch E."/>
            <person name="Rawlins N."/>
            <person name="Rajandream M.A."/>
            <person name="Reichard U."/>
            <person name="Renauld H."/>
            <person name="Robson G.D."/>
            <person name="Rodriguez de Cordoba S."/>
            <person name="Rodriguez-Pena J.M."/>
            <person name="Ronning C.M."/>
            <person name="Rutter S."/>
            <person name="Salzberg S.L."/>
            <person name="Sanchez M."/>
            <person name="Sanchez-Ferrero J.C."/>
            <person name="Saunders D."/>
            <person name="Seeger K."/>
            <person name="Squares R."/>
            <person name="Squares S."/>
            <person name="Takeuchi M."/>
            <person name="Tekaia F."/>
            <person name="Turner G."/>
            <person name="Vazquez de Aldana C.R."/>
            <person name="Weidman J."/>
            <person name="White O."/>
            <person name="Woodward J.R."/>
            <person name="Yu J.-H."/>
            <person name="Fraser C.M."/>
            <person name="Galagan J.E."/>
            <person name="Asai K."/>
            <person name="Machida M."/>
            <person name="Hall N."/>
            <person name="Barrell B.G."/>
            <person name="Denning D.W."/>
        </authorList>
    </citation>
    <scope>NUCLEOTIDE SEQUENCE [LARGE SCALE GENOMIC DNA]</scope>
    <source>
        <strain>ATCC MYA-4609 / CBS 101355 / FGSC A1100 / Af293</strain>
    </source>
</reference>
<dbReference type="EC" id="1.11.1.5" evidence="2"/>
<dbReference type="EMBL" id="AAHF01000005">
    <property type="protein sequence ID" value="EAL89876.1"/>
    <property type="molecule type" value="Genomic_DNA"/>
</dbReference>
<dbReference type="RefSeq" id="XP_751914.1">
    <property type="nucleotide sequence ID" value="XM_746821.1"/>
</dbReference>
<dbReference type="SMR" id="Q4WPF8"/>
<dbReference type="FunCoup" id="Q4WPF8">
    <property type="interactions" value="81"/>
</dbReference>
<dbReference type="STRING" id="330879.Q4WPF8"/>
<dbReference type="PeroxiBase" id="2363">
    <property type="entry name" value="AfumCcP02"/>
</dbReference>
<dbReference type="EnsemblFungi" id="EAL89876">
    <property type="protein sequence ID" value="EAL89876"/>
    <property type="gene ID" value="AFUA_4G09110"/>
</dbReference>
<dbReference type="GeneID" id="3509520"/>
<dbReference type="KEGG" id="afm:AFUA_4G09110"/>
<dbReference type="VEuPathDB" id="FungiDB:Afu4g09110"/>
<dbReference type="eggNOG" id="ENOG502QR1E">
    <property type="taxonomic scope" value="Eukaryota"/>
</dbReference>
<dbReference type="HOGENOM" id="CLU_036959_1_1_1"/>
<dbReference type="InParanoid" id="Q4WPF8"/>
<dbReference type="OMA" id="QRKWNGP"/>
<dbReference type="OrthoDB" id="2859658at2759"/>
<dbReference type="Proteomes" id="UP000002530">
    <property type="component" value="Chromosome 4"/>
</dbReference>
<dbReference type="GO" id="GO:0005758">
    <property type="term" value="C:mitochondrial intermembrane space"/>
    <property type="evidence" value="ECO:0007669"/>
    <property type="project" value="UniProtKB-SubCell"/>
</dbReference>
<dbReference type="GO" id="GO:0005759">
    <property type="term" value="C:mitochondrial matrix"/>
    <property type="evidence" value="ECO:0007669"/>
    <property type="project" value="UniProtKB-SubCell"/>
</dbReference>
<dbReference type="GO" id="GO:0004130">
    <property type="term" value="F:cytochrome-c peroxidase activity"/>
    <property type="evidence" value="ECO:0007669"/>
    <property type="project" value="UniProtKB-EC"/>
</dbReference>
<dbReference type="GO" id="GO:0020037">
    <property type="term" value="F:heme binding"/>
    <property type="evidence" value="ECO:0007669"/>
    <property type="project" value="InterPro"/>
</dbReference>
<dbReference type="GO" id="GO:0046872">
    <property type="term" value="F:metal ion binding"/>
    <property type="evidence" value="ECO:0007669"/>
    <property type="project" value="UniProtKB-KW"/>
</dbReference>
<dbReference type="GO" id="GO:0004601">
    <property type="term" value="F:peroxidase activity"/>
    <property type="evidence" value="ECO:0000318"/>
    <property type="project" value="GO_Central"/>
</dbReference>
<dbReference type="GO" id="GO:0034599">
    <property type="term" value="P:cellular response to oxidative stress"/>
    <property type="evidence" value="ECO:0000318"/>
    <property type="project" value="GO_Central"/>
</dbReference>
<dbReference type="GO" id="GO:0042744">
    <property type="term" value="P:hydrogen peroxide catabolic process"/>
    <property type="evidence" value="ECO:0000318"/>
    <property type="project" value="GO_Central"/>
</dbReference>
<dbReference type="GO" id="GO:0000302">
    <property type="term" value="P:response to reactive oxygen species"/>
    <property type="evidence" value="ECO:0000318"/>
    <property type="project" value="GO_Central"/>
</dbReference>
<dbReference type="CDD" id="cd00691">
    <property type="entry name" value="ascorbate_peroxidase"/>
    <property type="match status" value="1"/>
</dbReference>
<dbReference type="FunFam" id="1.10.420.10:FF:000009">
    <property type="entry name" value="Ascorbate peroxidase"/>
    <property type="match status" value="1"/>
</dbReference>
<dbReference type="FunFam" id="1.10.520.10:FF:000005">
    <property type="entry name" value="Cytochrome c peroxidase"/>
    <property type="match status" value="1"/>
</dbReference>
<dbReference type="Gene3D" id="1.10.520.10">
    <property type="match status" value="1"/>
</dbReference>
<dbReference type="Gene3D" id="1.10.420.10">
    <property type="entry name" value="Peroxidase, domain 2"/>
    <property type="match status" value="1"/>
</dbReference>
<dbReference type="InterPro" id="IPR044831">
    <property type="entry name" value="Ccp1-like"/>
</dbReference>
<dbReference type="InterPro" id="IPR002016">
    <property type="entry name" value="Haem_peroxidase"/>
</dbReference>
<dbReference type="InterPro" id="IPR010255">
    <property type="entry name" value="Haem_peroxidase_sf"/>
</dbReference>
<dbReference type="InterPro" id="IPR002207">
    <property type="entry name" value="Peroxidase_I"/>
</dbReference>
<dbReference type="InterPro" id="IPR019794">
    <property type="entry name" value="Peroxidases_AS"/>
</dbReference>
<dbReference type="InterPro" id="IPR019793">
    <property type="entry name" value="Peroxidases_heam-ligand_BS"/>
</dbReference>
<dbReference type="PANTHER" id="PTHR31356:SF58">
    <property type="entry name" value="CYTOCHROME C PEROXIDASE, MITOCHONDRIAL"/>
    <property type="match status" value="1"/>
</dbReference>
<dbReference type="PANTHER" id="PTHR31356">
    <property type="entry name" value="THYLAKOID LUMENAL 29 KDA PROTEIN, CHLOROPLASTIC-RELATED"/>
    <property type="match status" value="1"/>
</dbReference>
<dbReference type="Pfam" id="PF00141">
    <property type="entry name" value="peroxidase"/>
    <property type="match status" value="1"/>
</dbReference>
<dbReference type="PRINTS" id="PR00459">
    <property type="entry name" value="ASPEROXIDASE"/>
</dbReference>
<dbReference type="PRINTS" id="PR00458">
    <property type="entry name" value="PEROXIDASE"/>
</dbReference>
<dbReference type="SUPFAM" id="SSF48113">
    <property type="entry name" value="Heme-dependent peroxidases"/>
    <property type="match status" value="1"/>
</dbReference>
<dbReference type="PROSITE" id="PS00435">
    <property type="entry name" value="PEROXIDASE_1"/>
    <property type="match status" value="1"/>
</dbReference>
<dbReference type="PROSITE" id="PS00436">
    <property type="entry name" value="PEROXIDASE_2"/>
    <property type="match status" value="1"/>
</dbReference>
<dbReference type="PROSITE" id="PS50873">
    <property type="entry name" value="PEROXIDASE_4"/>
    <property type="match status" value="1"/>
</dbReference>
<comment type="function">
    <text evidence="2">Destroys radicals which are normally produced within the cells and which are toxic to biological systems.</text>
</comment>
<comment type="catalytic activity">
    <reaction evidence="2">
        <text>2 Fe(II)-[cytochrome c] + H2O2 + 2 H(+) = 2 Fe(III)-[cytochrome c] + 2 H2O</text>
        <dbReference type="Rhea" id="RHEA:16581"/>
        <dbReference type="Rhea" id="RHEA-COMP:10350"/>
        <dbReference type="Rhea" id="RHEA-COMP:14399"/>
        <dbReference type="ChEBI" id="CHEBI:15377"/>
        <dbReference type="ChEBI" id="CHEBI:15378"/>
        <dbReference type="ChEBI" id="CHEBI:16240"/>
        <dbReference type="ChEBI" id="CHEBI:29033"/>
        <dbReference type="ChEBI" id="CHEBI:29034"/>
        <dbReference type="EC" id="1.11.1.5"/>
    </reaction>
</comment>
<comment type="cofactor">
    <cofactor evidence="4">
        <name>heme b</name>
        <dbReference type="ChEBI" id="CHEBI:60344"/>
    </cofactor>
    <text evidence="4">Binds 1 heme b (iron(II)-protoporphyrin IX) group per subunit.</text>
</comment>
<comment type="subunit">
    <text evidence="2">Forms a one-to-one complex with cytochrome c.</text>
</comment>
<comment type="subcellular location">
    <subcellularLocation>
        <location evidence="2">Mitochondrion matrix</location>
    </subcellularLocation>
    <subcellularLocation>
        <location evidence="2">Mitochondrion intermembrane space</location>
    </subcellularLocation>
</comment>
<comment type="similarity">
    <text evidence="6">Belongs to the peroxidase family. Cytochrome c peroxidase subfamily.</text>
</comment>
<feature type="transit peptide" description="Mitochondrion" evidence="3">
    <location>
        <begin position="1"/>
        <end position="46"/>
    </location>
</feature>
<feature type="chain" id="PRO_0000045286" description="Cytochrome c peroxidase, mitochondrial">
    <location>
        <begin position="47"/>
        <end position="366"/>
    </location>
</feature>
<feature type="active site" description="Proton acceptor" evidence="4 5">
    <location>
        <position position="127"/>
    </location>
</feature>
<feature type="active site" description="Tryptophan radical intermediate" evidence="1">
    <location>
        <position position="266"/>
    </location>
</feature>
<feature type="binding site" description="axial binding residue">
    <location>
        <position position="250"/>
    </location>
    <ligand>
        <name>heme b</name>
        <dbReference type="ChEBI" id="CHEBI:60344"/>
    </ligand>
    <ligandPart>
        <name>Fe</name>
        <dbReference type="ChEBI" id="CHEBI:18248"/>
    </ligandPart>
</feature>
<feature type="site" description="Transition state stabilizer" evidence="4">
    <location>
        <position position="123"/>
    </location>
</feature>
<accession>Q4WPF8</accession>
<proteinExistence type="inferred from homology"/>
<gene>
    <name type="primary">ccp1</name>
    <name type="ORF">AFUA_4G09110</name>
</gene>
<organism>
    <name type="scientific">Aspergillus fumigatus (strain ATCC MYA-4609 / CBS 101355 / FGSC A1100 / Af293)</name>
    <name type="common">Neosartorya fumigata</name>
    <dbReference type="NCBI Taxonomy" id="330879"/>
    <lineage>
        <taxon>Eukaryota</taxon>
        <taxon>Fungi</taxon>
        <taxon>Dikarya</taxon>
        <taxon>Ascomycota</taxon>
        <taxon>Pezizomycotina</taxon>
        <taxon>Eurotiomycetes</taxon>
        <taxon>Eurotiomycetidae</taxon>
        <taxon>Eurotiales</taxon>
        <taxon>Aspergillaceae</taxon>
        <taxon>Aspergillus</taxon>
        <taxon>Aspergillus subgen. Fumigati</taxon>
    </lineage>
</organism>
<protein>
    <recommendedName>
        <fullName>Cytochrome c peroxidase, mitochondrial</fullName>
        <shortName>CCP</shortName>
        <ecNumber evidence="2">1.11.1.5</ecNumber>
    </recommendedName>
</protein>
<sequence length="366" mass="40379">MASAARSASRAFLRSTPTTSSFRPAVRAARFALPAQGFRAAGRRGYASEANSGKSSSNVFLWAGLAVAGGAGAYLYLNGSDSVTSKTFVPGKEDYQKVYDAIARRLADETDYDDGSYGPVLVRLAWHASGTYDKETGTGGSNGATMRFAPESDHGANAGLKIARDFLEPIKAQFPWISYSDLWTLAGACAIQELGGPTIPWRPGRQDKDVAACTPDGRLPDASKDQRHIRDIFYRMGFNDQEIVALIGAHALGRAHPDRSGYDGPWDFSPTVFTNEFFRLLVDEKWQNRKWNGPAQFTDKTTKTLMMLPADLALIKDKEFKKHVERYARDSDAFFKDFSDAFVKLLELGVPFTSKAEDRYVFKTSE</sequence>
<keyword id="KW-0349">Heme</keyword>
<keyword id="KW-0408">Iron</keyword>
<keyword id="KW-0479">Metal-binding</keyword>
<keyword id="KW-0496">Mitochondrion</keyword>
<keyword id="KW-0560">Oxidoreductase</keyword>
<keyword id="KW-0575">Peroxidase</keyword>
<keyword id="KW-1185">Reference proteome</keyword>
<keyword id="KW-0809">Transit peptide</keyword>
<evidence type="ECO:0000250" key="1"/>
<evidence type="ECO:0000250" key="2">
    <source>
        <dbReference type="UniProtKB" id="P00431"/>
    </source>
</evidence>
<evidence type="ECO:0000255" key="3"/>
<evidence type="ECO:0000255" key="4">
    <source>
        <dbReference type="PROSITE-ProRule" id="PRU00297"/>
    </source>
</evidence>
<evidence type="ECO:0000255" key="5">
    <source>
        <dbReference type="PROSITE-ProRule" id="PRU10012"/>
    </source>
</evidence>
<evidence type="ECO:0000305" key="6"/>
<name>CCPR_ASPFU</name>